<dbReference type="EC" id="7.1.1.2" evidence="1"/>
<dbReference type="EMBL" id="AY504593">
    <property type="protein sequence ID" value="AAS91458.1"/>
    <property type="molecule type" value="Genomic_DNA"/>
</dbReference>
<dbReference type="SMR" id="Q32ZZ9"/>
<dbReference type="GO" id="GO:0005743">
    <property type="term" value="C:mitochondrial inner membrane"/>
    <property type="evidence" value="ECO:0000250"/>
    <property type="project" value="UniProtKB"/>
</dbReference>
<dbReference type="GO" id="GO:0008137">
    <property type="term" value="F:NADH dehydrogenase (ubiquinone) activity"/>
    <property type="evidence" value="ECO:0007669"/>
    <property type="project" value="UniProtKB-EC"/>
</dbReference>
<dbReference type="GO" id="GO:0006120">
    <property type="term" value="P:mitochondrial electron transport, NADH to ubiquinone"/>
    <property type="evidence" value="ECO:0007669"/>
    <property type="project" value="InterPro"/>
</dbReference>
<dbReference type="InterPro" id="IPR050175">
    <property type="entry name" value="Complex_I_Subunit_2"/>
</dbReference>
<dbReference type="InterPro" id="IPR010933">
    <property type="entry name" value="NADH_DH_su2_C"/>
</dbReference>
<dbReference type="InterPro" id="IPR003917">
    <property type="entry name" value="NADH_UbQ_OxRdtase_chain2"/>
</dbReference>
<dbReference type="InterPro" id="IPR001750">
    <property type="entry name" value="ND/Mrp_TM"/>
</dbReference>
<dbReference type="PANTHER" id="PTHR46552">
    <property type="entry name" value="NADH-UBIQUINONE OXIDOREDUCTASE CHAIN 2"/>
    <property type="match status" value="1"/>
</dbReference>
<dbReference type="PANTHER" id="PTHR46552:SF1">
    <property type="entry name" value="NADH-UBIQUINONE OXIDOREDUCTASE CHAIN 2"/>
    <property type="match status" value="1"/>
</dbReference>
<dbReference type="Pfam" id="PF06444">
    <property type="entry name" value="NADH_dehy_S2_C"/>
    <property type="match status" value="1"/>
</dbReference>
<dbReference type="Pfam" id="PF00361">
    <property type="entry name" value="Proton_antipo_M"/>
    <property type="match status" value="1"/>
</dbReference>
<dbReference type="PRINTS" id="PR01436">
    <property type="entry name" value="NADHDHGNASE2"/>
</dbReference>
<name>NU2M_PTERO</name>
<geneLocation type="mitochondrion"/>
<evidence type="ECO:0000250" key="1">
    <source>
        <dbReference type="UniProtKB" id="P03891"/>
    </source>
</evidence>
<evidence type="ECO:0000250" key="2">
    <source>
        <dbReference type="UniProtKB" id="P03892"/>
    </source>
</evidence>
<evidence type="ECO:0000255" key="3"/>
<evidence type="ECO:0000305" key="4"/>
<proteinExistence type="inferred from homology"/>
<gene>
    <name evidence="1" type="primary">MT-ND2</name>
    <name type="synonym">MTND2</name>
    <name type="synonym">NADH2</name>
    <name type="synonym">ND2</name>
</gene>
<keyword id="KW-0249">Electron transport</keyword>
<keyword id="KW-0472">Membrane</keyword>
<keyword id="KW-0496">Mitochondrion</keyword>
<keyword id="KW-0999">Mitochondrion inner membrane</keyword>
<keyword id="KW-0520">NAD</keyword>
<keyword id="KW-0679">Respiratory chain</keyword>
<keyword id="KW-1278">Translocase</keyword>
<keyword id="KW-0812">Transmembrane</keyword>
<keyword id="KW-1133">Transmembrane helix</keyword>
<keyword id="KW-0813">Transport</keyword>
<keyword id="KW-0830">Ubiquinone</keyword>
<reference key="1">
    <citation type="submission" date="2003-12" db="EMBL/GenBank/DDBJ databases">
        <title>Bats and birds: flying in the face of mtDNA evolutionary rates.</title>
        <authorList>
            <person name="Worthington Wilmer J.M."/>
            <person name="Schneider C.J."/>
            <person name="Sorenson M.D."/>
        </authorList>
    </citation>
    <scope>NUCLEOTIDE SEQUENCE [GENOMIC DNA]</scope>
    <source>
        <strain>Isolate 1</strain>
    </source>
</reference>
<accession>Q32ZZ9</accession>
<comment type="function">
    <text evidence="1">Core subunit of the mitochondrial membrane respiratory chain NADH dehydrogenase (Complex I) which catalyzes electron transfer from NADH through the respiratory chain, using ubiquinone as an electron acceptor. Essential for the catalytic activity and assembly of complex I.</text>
</comment>
<comment type="catalytic activity">
    <reaction evidence="1">
        <text>a ubiquinone + NADH + 5 H(+)(in) = a ubiquinol + NAD(+) + 4 H(+)(out)</text>
        <dbReference type="Rhea" id="RHEA:29091"/>
        <dbReference type="Rhea" id="RHEA-COMP:9565"/>
        <dbReference type="Rhea" id="RHEA-COMP:9566"/>
        <dbReference type="ChEBI" id="CHEBI:15378"/>
        <dbReference type="ChEBI" id="CHEBI:16389"/>
        <dbReference type="ChEBI" id="CHEBI:17976"/>
        <dbReference type="ChEBI" id="CHEBI:57540"/>
        <dbReference type="ChEBI" id="CHEBI:57945"/>
        <dbReference type="EC" id="7.1.1.2"/>
    </reaction>
</comment>
<comment type="subunit">
    <text evidence="1 2">Core subunit of respiratory chain NADH dehydrogenase (Complex I) which is composed of 45 different subunits. Interacts with TMEM242 (By similarity).</text>
</comment>
<comment type="subcellular location">
    <subcellularLocation>
        <location evidence="2">Mitochondrion inner membrane</location>
        <topology evidence="3">Multi-pass membrane protein</topology>
    </subcellularLocation>
</comment>
<comment type="similarity">
    <text evidence="4">Belongs to the complex I subunit 2 family.</text>
</comment>
<organism>
    <name type="scientific">Pteropus rodricensis</name>
    <name type="common">Rodriguez flying fox</name>
    <dbReference type="NCBI Taxonomy" id="77216"/>
    <lineage>
        <taxon>Eukaryota</taxon>
        <taxon>Metazoa</taxon>
        <taxon>Chordata</taxon>
        <taxon>Craniata</taxon>
        <taxon>Vertebrata</taxon>
        <taxon>Euteleostomi</taxon>
        <taxon>Mammalia</taxon>
        <taxon>Eutheria</taxon>
        <taxon>Laurasiatheria</taxon>
        <taxon>Chiroptera</taxon>
        <taxon>Yinpterochiroptera</taxon>
        <taxon>Pteropodoidea</taxon>
        <taxon>Pteropodidae</taxon>
        <taxon>Pteropodinae</taxon>
        <taxon>Pteropus</taxon>
    </lineage>
</organism>
<sequence>MNPLVFTMIMSTVMLGTAIVATSSHWLMAWIGFEMNMLAVIPILMKKYNPRSMEASTKYFLTQATASMLLMLAVTMNLVYSGQWSITKPLNPTASTIMTLAMAMKLGLSPFHFWVPEVTQGISLPSGLILLTWQKLAPMSILYQISPPINLDLLMMLINLSIAIGGWGGLNQTQLRKIMAYSSIAHMGWMTAILTYNPTMTLLNLMIYILLTTTTFMMFMLSSTTTTLSLSHTWNKMPLLTTAILLTMLSLGGLPPLSGFMPKWMIIQELTKNNSVIMPTTMAVMALLNLYFYMRLTYSTSLTMFPSTNNMKMKWQFNYTKSTTHLSPLIILSTLILPLSPMLALLE</sequence>
<feature type="chain" id="PRO_0000256678" description="NADH-ubiquinone oxidoreductase chain 2">
    <location>
        <begin position="1"/>
        <end position="347"/>
    </location>
</feature>
<feature type="transmembrane region" description="Helical" evidence="3">
    <location>
        <begin position="1"/>
        <end position="21"/>
    </location>
</feature>
<feature type="transmembrane region" description="Helical" evidence="3">
    <location>
        <begin position="25"/>
        <end position="45"/>
    </location>
</feature>
<feature type="transmembrane region" description="Helical" evidence="3">
    <location>
        <begin position="59"/>
        <end position="79"/>
    </location>
</feature>
<feature type="transmembrane region" description="Helical" evidence="3">
    <location>
        <begin position="111"/>
        <end position="131"/>
    </location>
</feature>
<feature type="transmembrane region" description="Helical" evidence="3">
    <location>
        <begin position="149"/>
        <end position="169"/>
    </location>
</feature>
<feature type="transmembrane region" description="Helical" evidence="3">
    <location>
        <begin position="178"/>
        <end position="198"/>
    </location>
</feature>
<feature type="transmembrane region" description="Helical" evidence="3">
    <location>
        <begin position="201"/>
        <end position="221"/>
    </location>
</feature>
<feature type="transmembrane region" description="Helical" evidence="3">
    <location>
        <begin position="237"/>
        <end position="257"/>
    </location>
</feature>
<feature type="transmembrane region" description="Helical" evidence="3">
    <location>
        <begin position="274"/>
        <end position="294"/>
    </location>
</feature>
<feature type="transmembrane region" description="Helical" evidence="3">
    <location>
        <begin position="326"/>
        <end position="346"/>
    </location>
</feature>
<protein>
    <recommendedName>
        <fullName evidence="1">NADH-ubiquinone oxidoreductase chain 2</fullName>
        <ecNumber evidence="1">7.1.1.2</ecNumber>
    </recommendedName>
    <alternativeName>
        <fullName>NADH dehydrogenase subunit 2</fullName>
    </alternativeName>
</protein>